<accession>P0CD36</accession>
<accession>Q8W848</accession>
<gene>
    <name evidence="1" type="primary">ndhB1</name>
</gene>
<geneLocation type="chloroplast"/>
<keyword id="KW-0150">Chloroplast</keyword>
<keyword id="KW-0472">Membrane</keyword>
<keyword id="KW-0520">NAD</keyword>
<keyword id="KW-0521">NADP</keyword>
<keyword id="KW-0934">Plastid</keyword>
<keyword id="KW-0618">Plastoquinone</keyword>
<keyword id="KW-0874">Quinone</keyword>
<keyword id="KW-0793">Thylakoid</keyword>
<keyword id="KW-1278">Translocase</keyword>
<keyword id="KW-0812">Transmembrane</keyword>
<keyword id="KW-1133">Transmembrane helix</keyword>
<keyword id="KW-0813">Transport</keyword>
<dbReference type="EC" id="7.1.1.-" evidence="1"/>
<dbReference type="EMBL" id="AP004638">
    <property type="protein sequence ID" value="BAB84294.1"/>
    <property type="molecule type" value="Genomic_DNA"/>
</dbReference>
<dbReference type="SMR" id="P0CD36"/>
<dbReference type="GO" id="GO:0009535">
    <property type="term" value="C:chloroplast thylakoid membrane"/>
    <property type="evidence" value="ECO:0007669"/>
    <property type="project" value="UniProtKB-SubCell"/>
</dbReference>
<dbReference type="GO" id="GO:0008137">
    <property type="term" value="F:NADH dehydrogenase (ubiquinone) activity"/>
    <property type="evidence" value="ECO:0007669"/>
    <property type="project" value="InterPro"/>
</dbReference>
<dbReference type="GO" id="GO:0048038">
    <property type="term" value="F:quinone binding"/>
    <property type="evidence" value="ECO:0007669"/>
    <property type="project" value="UniProtKB-KW"/>
</dbReference>
<dbReference type="GO" id="GO:0042773">
    <property type="term" value="P:ATP synthesis coupled electron transport"/>
    <property type="evidence" value="ECO:0007669"/>
    <property type="project" value="InterPro"/>
</dbReference>
<dbReference type="GO" id="GO:0019684">
    <property type="term" value="P:photosynthesis, light reaction"/>
    <property type="evidence" value="ECO:0007669"/>
    <property type="project" value="UniProtKB-UniRule"/>
</dbReference>
<dbReference type="HAMAP" id="MF_00445">
    <property type="entry name" value="NDH1_NuoN_1"/>
    <property type="match status" value="1"/>
</dbReference>
<dbReference type="InterPro" id="IPR010096">
    <property type="entry name" value="NADH-Q_OxRdtase_suN/2"/>
</dbReference>
<dbReference type="InterPro" id="IPR001750">
    <property type="entry name" value="ND/Mrp_TM"/>
</dbReference>
<dbReference type="InterPro" id="IPR045693">
    <property type="entry name" value="Ndh2_N"/>
</dbReference>
<dbReference type="NCBIfam" id="TIGR01770">
    <property type="entry name" value="NDH_I_N"/>
    <property type="match status" value="1"/>
</dbReference>
<dbReference type="NCBIfam" id="NF002701">
    <property type="entry name" value="PRK02504.1"/>
    <property type="match status" value="1"/>
</dbReference>
<dbReference type="PANTHER" id="PTHR22773">
    <property type="entry name" value="NADH DEHYDROGENASE"/>
    <property type="match status" value="1"/>
</dbReference>
<dbReference type="Pfam" id="PF19530">
    <property type="entry name" value="Ndh2_N"/>
    <property type="match status" value="1"/>
</dbReference>
<dbReference type="Pfam" id="PF00361">
    <property type="entry name" value="Proton_antipo_M"/>
    <property type="match status" value="1"/>
</dbReference>
<dbReference type="PRINTS" id="PR01434">
    <property type="entry name" value="NADHDHGNASE5"/>
</dbReference>
<organism>
    <name type="scientific">Psilotum nudum</name>
    <name type="common">Whisk fern</name>
    <name type="synonym">Lycopodium nudum</name>
    <dbReference type="NCBI Taxonomy" id="3240"/>
    <lineage>
        <taxon>Eukaryota</taxon>
        <taxon>Viridiplantae</taxon>
        <taxon>Streptophyta</taxon>
        <taxon>Embryophyta</taxon>
        <taxon>Tracheophyta</taxon>
        <taxon>Polypodiopsida</taxon>
        <taxon>Ophioglossidae</taxon>
        <taxon>Psilotales</taxon>
        <taxon>Psilotaceae</taxon>
        <taxon>Psilotum</taxon>
    </lineage>
</organism>
<feature type="chain" id="PRO_0000117675" description="NAD(P)H-quinone oxidoreductase subunit 2 A, chloroplastic">
    <location>
        <begin position="1"/>
        <end position="496"/>
    </location>
</feature>
<feature type="transmembrane region" description="Helical" evidence="1">
    <location>
        <begin position="13"/>
        <end position="33"/>
    </location>
</feature>
<feature type="transmembrane region" description="Helical" evidence="1">
    <location>
        <begin position="41"/>
        <end position="61"/>
    </location>
</feature>
<feature type="transmembrane region" description="Helical" evidence="1">
    <location>
        <begin position="83"/>
        <end position="103"/>
    </location>
</feature>
<feature type="transmembrane region" description="Helical" evidence="1">
    <location>
        <begin position="110"/>
        <end position="130"/>
    </location>
</feature>
<feature type="transmembrane region" description="Helical" evidence="1">
    <location>
        <begin position="133"/>
        <end position="153"/>
    </location>
</feature>
<feature type="transmembrane region" description="Helical" evidence="1">
    <location>
        <begin position="168"/>
        <end position="188"/>
    </location>
</feature>
<feature type="transmembrane region" description="Helical" evidence="1">
    <location>
        <begin position="213"/>
        <end position="233"/>
    </location>
</feature>
<feature type="transmembrane region" description="Helical" evidence="1">
    <location>
        <begin position="245"/>
        <end position="265"/>
    </location>
</feature>
<feature type="transmembrane region" description="Helical" evidence="1">
    <location>
        <begin position="279"/>
        <end position="299"/>
    </location>
</feature>
<feature type="transmembrane region" description="Helical" evidence="1">
    <location>
        <begin position="307"/>
        <end position="327"/>
    </location>
</feature>
<feature type="transmembrane region" description="Helical" evidence="1">
    <location>
        <begin position="338"/>
        <end position="358"/>
    </location>
</feature>
<feature type="transmembrane region" description="Helical" evidence="1">
    <location>
        <begin position="380"/>
        <end position="400"/>
    </location>
</feature>
<feature type="transmembrane region" description="Helical" evidence="1">
    <location>
        <begin position="413"/>
        <end position="435"/>
    </location>
</feature>
<feature type="transmembrane region" description="Helical" evidence="1">
    <location>
        <begin position="470"/>
        <end position="490"/>
    </location>
</feature>
<proteinExistence type="inferred from homology"/>
<evidence type="ECO:0000255" key="1">
    <source>
        <dbReference type="HAMAP-Rule" id="MF_00445"/>
    </source>
</evidence>
<name>NU2C1_PSINU</name>
<reference key="1">
    <citation type="journal article" date="2004" name="Mol. Biol. Evol.">
        <title>Chloroplast phylogeny indicates that bryophytes are monophyletic.</title>
        <authorList>
            <person name="Nishiyama T."/>
            <person name="Wolf P.G."/>
            <person name="Kugita M."/>
            <person name="Sinclair R.B."/>
            <person name="Sugita M."/>
            <person name="Sugiura C."/>
            <person name="Wakasugi T."/>
            <person name="Yamada K."/>
            <person name="Yoshinaga K."/>
            <person name="Yamaguchi K."/>
            <person name="Ueda K."/>
            <person name="Hasebe M."/>
        </authorList>
    </citation>
    <scope>NUCLEOTIDE SEQUENCE [LARGE SCALE GENOMIC DNA]</scope>
    <source>
        <strain>Kingyoku</strain>
    </source>
</reference>
<protein>
    <recommendedName>
        <fullName evidence="1">NAD(P)H-quinone oxidoreductase subunit 2 A, chloroplastic</fullName>
        <ecNumber evidence="1">7.1.1.-</ecNumber>
    </recommendedName>
    <alternativeName>
        <fullName evidence="1">NAD(P)H dehydrogenase, subunit 2 A</fullName>
    </alternativeName>
    <alternativeName>
        <fullName evidence="1">NADH-plastoquinone oxidoreductase subunit 2 A</fullName>
    </alternativeName>
</protein>
<sequence>MKEIESFLVYSSSILPECILIFSSIGILSIDLLSLPNEGDTFWSYSISLAALAISIIILLLQWNKEPVLTFSETFQISRFNDIFRFFLLICSFLCIPLSVDYIRCTKMPVTEFLLFVLTATLGGMFLCGANDLISIFVASECLALSSYLLSGYTKRDVRSNEAMMKYLLMGGASSSILVYGFSLPYGLSGGEIQLRGMVNGLINMQMYNSAGVSIAMIFILVGIGFKLSLVPFHQWTPDVYEGSPTPVVAFFSVTSKVAALALATRLFHILFSSLSNEWHLPLEILAILSMILGNLIAVTQTSMKRMLAYSSISQIGYILIGIIAGDSDNGYASMITYMLIYIFMNLGTFACITSFGLRTGTDNIRDYAGLYRKDPILTLSLVLCLLSLGGIPPLAGFFGKLYLFWCGWKAGLYFLVSIALFTSVISIYYYSRIIKLLFTERNKRITIYMQDYKGSPYFLIPNNSIGITMILCTIASTVPGILINPIIAIAQNTLF</sequence>
<comment type="function">
    <text evidence="1">NDH shuttles electrons from NAD(P)H:plastoquinone, via FMN and iron-sulfur (Fe-S) centers, to quinones in the photosynthetic chain and possibly in a chloroplast respiratory chain. The immediate electron acceptor for the enzyme in this species is believed to be plastoquinone. Couples the redox reaction to proton translocation, and thus conserves the redox energy in a proton gradient.</text>
</comment>
<comment type="catalytic activity">
    <reaction evidence="1">
        <text>a plastoquinone + NADH + (n+1) H(+)(in) = a plastoquinol + NAD(+) + n H(+)(out)</text>
        <dbReference type="Rhea" id="RHEA:42608"/>
        <dbReference type="Rhea" id="RHEA-COMP:9561"/>
        <dbReference type="Rhea" id="RHEA-COMP:9562"/>
        <dbReference type="ChEBI" id="CHEBI:15378"/>
        <dbReference type="ChEBI" id="CHEBI:17757"/>
        <dbReference type="ChEBI" id="CHEBI:57540"/>
        <dbReference type="ChEBI" id="CHEBI:57945"/>
        <dbReference type="ChEBI" id="CHEBI:62192"/>
    </reaction>
</comment>
<comment type="catalytic activity">
    <reaction evidence="1">
        <text>a plastoquinone + NADPH + (n+1) H(+)(in) = a plastoquinol + NADP(+) + n H(+)(out)</text>
        <dbReference type="Rhea" id="RHEA:42612"/>
        <dbReference type="Rhea" id="RHEA-COMP:9561"/>
        <dbReference type="Rhea" id="RHEA-COMP:9562"/>
        <dbReference type="ChEBI" id="CHEBI:15378"/>
        <dbReference type="ChEBI" id="CHEBI:17757"/>
        <dbReference type="ChEBI" id="CHEBI:57783"/>
        <dbReference type="ChEBI" id="CHEBI:58349"/>
        <dbReference type="ChEBI" id="CHEBI:62192"/>
    </reaction>
</comment>
<comment type="subunit">
    <text evidence="1">NDH is composed of at least 16 different subunits, 5 of which are encoded in the nucleus.</text>
</comment>
<comment type="subcellular location">
    <subcellularLocation>
        <location evidence="1">Plastid</location>
        <location evidence="1">Chloroplast thylakoid membrane</location>
        <topology evidence="1">Multi-pass membrane protein</topology>
    </subcellularLocation>
</comment>
<comment type="similarity">
    <text evidence="1">Belongs to the complex I subunit 2 family.</text>
</comment>